<evidence type="ECO:0000250" key="1">
    <source>
        <dbReference type="UniProtKB" id="P11441"/>
    </source>
</evidence>
<evidence type="ECO:0000255" key="2">
    <source>
        <dbReference type="PROSITE-ProRule" id="PRU00214"/>
    </source>
</evidence>
<reference key="1">
    <citation type="submission" date="2005-07" db="EMBL/GenBank/DDBJ databases">
        <authorList>
            <person name="Mural R.J."/>
            <person name="Adams M.D."/>
            <person name="Myers E.W."/>
            <person name="Smith H.O."/>
            <person name="Venter J.C."/>
        </authorList>
    </citation>
    <scope>NUCLEOTIDE SEQUENCE [LARGE SCALE GENOMIC DNA]</scope>
    <source>
        <strain>Brown Norway</strain>
    </source>
</reference>
<reference key="2">
    <citation type="journal article" date="2004" name="Genome Res.">
        <title>The status, quality, and expansion of the NIH full-length cDNA project: the Mammalian Gene Collection (MGC).</title>
        <authorList>
            <consortium name="The MGC Project Team"/>
        </authorList>
    </citation>
    <scope>NUCLEOTIDE SEQUENCE [LARGE SCALE MRNA]</scope>
    <source>
        <tissue>Kidney</tissue>
    </source>
</reference>
<dbReference type="EMBL" id="CH474099">
    <property type="protein sequence ID" value="EDL84970.1"/>
    <property type="molecule type" value="Genomic_DNA"/>
</dbReference>
<dbReference type="EMBL" id="BC166513">
    <property type="protein sequence ID" value="AAI66513.1"/>
    <property type="molecule type" value="mRNA"/>
</dbReference>
<dbReference type="RefSeq" id="NP_001099816.1">
    <property type="nucleotide sequence ID" value="NM_001106346.2"/>
</dbReference>
<dbReference type="SMR" id="B2GV38"/>
<dbReference type="BioGRID" id="254493">
    <property type="interactions" value="3"/>
</dbReference>
<dbReference type="FunCoup" id="B2GV38">
    <property type="interactions" value="971"/>
</dbReference>
<dbReference type="STRING" id="10116.ENSRNOP00000074769"/>
<dbReference type="iPTMnet" id="B2GV38"/>
<dbReference type="PhosphoSitePlus" id="B2GV38"/>
<dbReference type="jPOST" id="B2GV38"/>
<dbReference type="PaxDb" id="10116-ENSRNOP00000053153"/>
<dbReference type="PeptideAtlas" id="B2GV38"/>
<dbReference type="GeneID" id="293864"/>
<dbReference type="KEGG" id="rno:293864"/>
<dbReference type="AGR" id="RGD:1563983"/>
<dbReference type="CTD" id="8266"/>
<dbReference type="RGD" id="1563983">
    <property type="gene designation" value="Ubl4a"/>
</dbReference>
<dbReference type="VEuPathDB" id="HostDB:ENSRNOG00000053061"/>
<dbReference type="eggNOG" id="KOG0001">
    <property type="taxonomic scope" value="Eukaryota"/>
</dbReference>
<dbReference type="HOGENOM" id="CLU_119809_0_0_1"/>
<dbReference type="InParanoid" id="B2GV38"/>
<dbReference type="OrthoDB" id="63369at9989"/>
<dbReference type="PhylomeDB" id="B2GV38"/>
<dbReference type="TreeFam" id="TF354228"/>
<dbReference type="PRO" id="PR:B2GV38"/>
<dbReference type="Proteomes" id="UP000002494">
    <property type="component" value="Chromosome X"/>
</dbReference>
<dbReference type="Proteomes" id="UP000234681">
    <property type="component" value="Chromosome 1"/>
</dbReference>
<dbReference type="Bgee" id="ENSRNOG00000053061">
    <property type="expression patterns" value="Expressed in skeletal muscle tissue and 20 other cell types or tissues"/>
</dbReference>
<dbReference type="GO" id="GO:0071818">
    <property type="term" value="C:BAT3 complex"/>
    <property type="evidence" value="ECO:0000250"/>
    <property type="project" value="UniProtKB"/>
</dbReference>
<dbReference type="GO" id="GO:0005737">
    <property type="term" value="C:cytoplasm"/>
    <property type="evidence" value="ECO:0000266"/>
    <property type="project" value="RGD"/>
</dbReference>
<dbReference type="GO" id="GO:0005829">
    <property type="term" value="C:cytosol"/>
    <property type="evidence" value="ECO:0000250"/>
    <property type="project" value="UniProtKB"/>
</dbReference>
<dbReference type="GO" id="GO:0016020">
    <property type="term" value="C:membrane"/>
    <property type="evidence" value="ECO:0000266"/>
    <property type="project" value="RGD"/>
</dbReference>
<dbReference type="GO" id="GO:0005634">
    <property type="term" value="C:nucleus"/>
    <property type="evidence" value="ECO:0000266"/>
    <property type="project" value="RGD"/>
</dbReference>
<dbReference type="GO" id="GO:0051087">
    <property type="term" value="F:protein-folding chaperone binding"/>
    <property type="evidence" value="ECO:0000266"/>
    <property type="project" value="RGD"/>
</dbReference>
<dbReference type="GO" id="GO:0006620">
    <property type="term" value="P:post-translational protein targeting to endoplasmic reticulum membrane"/>
    <property type="evidence" value="ECO:0000266"/>
    <property type="project" value="RGD"/>
</dbReference>
<dbReference type="GO" id="GO:0031647">
    <property type="term" value="P:regulation of protein stability"/>
    <property type="evidence" value="ECO:0000266"/>
    <property type="project" value="RGD"/>
</dbReference>
<dbReference type="GO" id="GO:0071816">
    <property type="term" value="P:tail-anchored membrane protein insertion into ER membrane"/>
    <property type="evidence" value="ECO:0000250"/>
    <property type="project" value="UniProtKB"/>
</dbReference>
<dbReference type="GO" id="GO:0006511">
    <property type="term" value="P:ubiquitin-dependent protein catabolic process"/>
    <property type="evidence" value="ECO:0000266"/>
    <property type="project" value="RGD"/>
</dbReference>
<dbReference type="CDD" id="cd01807">
    <property type="entry name" value="Ubl_UBL4A_like"/>
    <property type="match status" value="1"/>
</dbReference>
<dbReference type="FunFam" id="3.10.20.90:FF:000144">
    <property type="entry name" value="Ubiquitin-like protein 4A"/>
    <property type="match status" value="1"/>
</dbReference>
<dbReference type="Gene3D" id="3.10.20.90">
    <property type="entry name" value="Phosphatidylinositol 3-kinase Catalytic Subunit, Chain A, domain 1"/>
    <property type="match status" value="1"/>
</dbReference>
<dbReference type="InterPro" id="IPR000626">
    <property type="entry name" value="Ubiquitin-like_dom"/>
</dbReference>
<dbReference type="InterPro" id="IPR029071">
    <property type="entry name" value="Ubiquitin-like_domsf"/>
</dbReference>
<dbReference type="InterPro" id="IPR019954">
    <property type="entry name" value="Ubiquitin_CS"/>
</dbReference>
<dbReference type="InterPro" id="IPR019956">
    <property type="entry name" value="Ubiquitin_dom"/>
</dbReference>
<dbReference type="InterPro" id="IPR041421">
    <property type="entry name" value="Ubl4_C_TUGS"/>
</dbReference>
<dbReference type="InterPro" id="IPR047154">
    <property type="entry name" value="UBL4A-like"/>
</dbReference>
<dbReference type="InterPro" id="IPR044724">
    <property type="entry name" value="Ubl_UBL4A-like"/>
</dbReference>
<dbReference type="PANTHER" id="PTHR46555">
    <property type="entry name" value="UBIQUITIN-LIKE PROTEIN 4A"/>
    <property type="match status" value="1"/>
</dbReference>
<dbReference type="PANTHER" id="PTHR46555:SF1">
    <property type="entry name" value="UBIQUITIN-LIKE PROTEIN 4A"/>
    <property type="match status" value="1"/>
</dbReference>
<dbReference type="Pfam" id="PF17840">
    <property type="entry name" value="Tugs"/>
    <property type="match status" value="1"/>
</dbReference>
<dbReference type="Pfam" id="PF00240">
    <property type="entry name" value="ubiquitin"/>
    <property type="match status" value="1"/>
</dbReference>
<dbReference type="PRINTS" id="PR00348">
    <property type="entry name" value="UBIQUITIN"/>
</dbReference>
<dbReference type="SMART" id="SM00213">
    <property type="entry name" value="UBQ"/>
    <property type="match status" value="1"/>
</dbReference>
<dbReference type="SUPFAM" id="SSF54236">
    <property type="entry name" value="Ubiquitin-like"/>
    <property type="match status" value="1"/>
</dbReference>
<dbReference type="PROSITE" id="PS00299">
    <property type="entry name" value="UBIQUITIN_1"/>
    <property type="match status" value="1"/>
</dbReference>
<dbReference type="PROSITE" id="PS50053">
    <property type="entry name" value="UBIQUITIN_2"/>
    <property type="match status" value="1"/>
</dbReference>
<comment type="function">
    <text evidence="1">As part of a cytosolic protein quality control complex, the BAG6/BAT3 complex, maintains misfolded and hydrophobic patches-containing proteins in a soluble state and participates in their proper delivery to the endoplasmic reticulum or alternatively can promote their sorting to the proteasome where they undergo degradation. The BAG6/BAT3 complex is involved in the post-translational delivery of tail-anchored/type II transmembrane proteins to the endoplasmic reticulum membrane. Recruited to ribosomes, it interacts with the transmembrane region of newly synthesized tail-anchored proteins and together with SGTA and ASNA1 mediates their delivery to the endoplasmic reticulum. Client proteins that cannot be properly delivered to the endoplasmic reticulum are ubiquitinated and sorted to the proteasome. Similarly, the BAG6/BAT3 complex also functions as a sorting platform for proteins of the secretory pathway that are mislocalized to the cytosol either delivering them to the proteasome for degradation or to the endoplasmic reticulum. The BAG6/BAT3 complex also plays a role in the endoplasmic reticulum-associated degradation (ERAD), a quality control mechanism that eliminates unwanted proteins of the endoplasmic reticulum through their retrotranslocation to the cytosol and their targeting to the proteasome. It maintains these retrotranslocated proteins in an unfolded yet soluble state condition in the cytosol to ensure their proper delivery to the proteasome.</text>
</comment>
<comment type="subunit">
    <text evidence="1">Component of the BAG6/BAT3 complex, at least composed of BAG6, UBL4A and GET4/TRC35. Interacts with BAG6; the interaction is direct and required for UBL4A protein stability. Interacts with USP13; may be indirect via BAG6.</text>
</comment>
<comment type="subcellular location">
    <subcellularLocation>
        <location evidence="1">Cytoplasm</location>
        <location evidence="1">Cytosol</location>
    </subcellularLocation>
    <subcellularLocation>
        <location evidence="1">Nucleus</location>
    </subcellularLocation>
</comment>
<comment type="PTM">
    <text evidence="1">Polyubiquitinated. Ubiquitination by AMFR and deubiquitination by USP13 may regulate the interaction between the BAG6/BAT complex and SGTA and therefore may regulate client proteins fate.</text>
</comment>
<proteinExistence type="evidence at transcript level"/>
<keyword id="KW-0963">Cytoplasm</keyword>
<keyword id="KW-1017">Isopeptide bond</keyword>
<keyword id="KW-0539">Nucleus</keyword>
<keyword id="KW-0597">Phosphoprotein</keyword>
<keyword id="KW-1185">Reference proteome</keyword>
<keyword id="KW-0813">Transport</keyword>
<keyword id="KW-0832">Ubl conjugation</keyword>
<gene>
    <name type="primary">Ubl4a</name>
    <name type="synonym">Ubl4</name>
</gene>
<sequence length="157" mass="17791">MQLTVKALQGRECSLQVAEDELVSTLKHLVSDKLNVPVRQQRLLFKGKALADEKRLSDYNIGPNSKLNLVVKPLEKVLLEEGSAHRLVDSSATPIWQLISKVLARHFSIGDASRVLEQLQRDYDRSLSRLTLDDIERLASRFLHPEVTEAMEKGFCK</sequence>
<accession>B2GV38</accession>
<protein>
    <recommendedName>
        <fullName>Ubiquitin-like protein 4A</fullName>
    </recommendedName>
</protein>
<feature type="chain" id="PRO_0000403739" description="Ubiquitin-like protein 4A">
    <location>
        <begin position="1"/>
        <end position="157"/>
    </location>
</feature>
<feature type="domain" description="Ubiquitin-like" evidence="2">
    <location>
        <begin position="1"/>
        <end position="76"/>
    </location>
</feature>
<feature type="region of interest" description="Required and sufficient for interaction with BAG6" evidence="1">
    <location>
        <begin position="96"/>
        <end position="138"/>
    </location>
</feature>
<feature type="modified residue" description="Phosphoserine" evidence="1">
    <location>
        <position position="90"/>
    </location>
</feature>
<feature type="cross-link" description="Glycyl lysine isopeptide (Lys-Gly) (interchain with G-Cter in ubiquitin)" evidence="1">
    <location>
        <position position="48"/>
    </location>
</feature>
<name>UBL4A_RAT</name>
<organism>
    <name type="scientific">Rattus norvegicus</name>
    <name type="common">Rat</name>
    <dbReference type="NCBI Taxonomy" id="10116"/>
    <lineage>
        <taxon>Eukaryota</taxon>
        <taxon>Metazoa</taxon>
        <taxon>Chordata</taxon>
        <taxon>Craniata</taxon>
        <taxon>Vertebrata</taxon>
        <taxon>Euteleostomi</taxon>
        <taxon>Mammalia</taxon>
        <taxon>Eutheria</taxon>
        <taxon>Euarchontoglires</taxon>
        <taxon>Glires</taxon>
        <taxon>Rodentia</taxon>
        <taxon>Myomorpha</taxon>
        <taxon>Muroidea</taxon>
        <taxon>Muridae</taxon>
        <taxon>Murinae</taxon>
        <taxon>Rattus</taxon>
    </lineage>
</organism>